<comment type="function">
    <text evidence="1">Catalyzes the NADPH-dependent reduction of N-acetyl-5-glutamyl phosphate to yield N-acetyl-L-glutamate 5-semialdehyde.</text>
</comment>
<comment type="catalytic activity">
    <reaction evidence="1">
        <text>N-acetyl-L-glutamate 5-semialdehyde + phosphate + NADP(+) = N-acetyl-L-glutamyl 5-phosphate + NADPH + H(+)</text>
        <dbReference type="Rhea" id="RHEA:21588"/>
        <dbReference type="ChEBI" id="CHEBI:15378"/>
        <dbReference type="ChEBI" id="CHEBI:29123"/>
        <dbReference type="ChEBI" id="CHEBI:43474"/>
        <dbReference type="ChEBI" id="CHEBI:57783"/>
        <dbReference type="ChEBI" id="CHEBI:57936"/>
        <dbReference type="ChEBI" id="CHEBI:58349"/>
        <dbReference type="EC" id="1.2.1.38"/>
    </reaction>
</comment>
<comment type="pathway">
    <text evidence="1">Amino-acid biosynthesis; L-arginine biosynthesis; N(2)-acetyl-L-ornithine from L-glutamate: step 3/4.</text>
</comment>
<comment type="subcellular location">
    <subcellularLocation>
        <location evidence="1">Cytoplasm</location>
    </subcellularLocation>
</comment>
<comment type="similarity">
    <text evidence="1">Belongs to the NAGSA dehydrogenase family. Type 1 subfamily.</text>
</comment>
<feature type="chain" id="PRO_1000071517" description="N-acetyl-gamma-glutamyl-phosphate reductase">
    <location>
        <begin position="1"/>
        <end position="355"/>
    </location>
</feature>
<feature type="active site" evidence="1">
    <location>
        <position position="152"/>
    </location>
</feature>
<evidence type="ECO:0000255" key="1">
    <source>
        <dbReference type="HAMAP-Rule" id="MF_00150"/>
    </source>
</evidence>
<keyword id="KW-0028">Amino-acid biosynthesis</keyword>
<keyword id="KW-0055">Arginine biosynthesis</keyword>
<keyword id="KW-0963">Cytoplasm</keyword>
<keyword id="KW-0521">NADP</keyword>
<keyword id="KW-0560">Oxidoreductase</keyword>
<organism>
    <name type="scientific">Psychrobacter sp. (strain PRwf-1)</name>
    <dbReference type="NCBI Taxonomy" id="349106"/>
    <lineage>
        <taxon>Bacteria</taxon>
        <taxon>Pseudomonadati</taxon>
        <taxon>Pseudomonadota</taxon>
        <taxon>Gammaproteobacteria</taxon>
        <taxon>Moraxellales</taxon>
        <taxon>Moraxellaceae</taxon>
        <taxon>Psychrobacter</taxon>
    </lineage>
</organism>
<gene>
    <name evidence="1" type="primary">argC</name>
    <name type="ordered locus">PsycPRwf_1598</name>
</gene>
<protein>
    <recommendedName>
        <fullName evidence="1">N-acetyl-gamma-glutamyl-phosphate reductase</fullName>
        <shortName evidence="1">AGPR</shortName>
        <ecNumber evidence="1">1.2.1.38</ecNumber>
    </recommendedName>
    <alternativeName>
        <fullName evidence="1">N-acetyl-glutamate semialdehyde dehydrogenase</fullName>
        <shortName evidence="1">NAGSA dehydrogenase</shortName>
    </alternativeName>
</protein>
<accession>A5WFU8</accession>
<sequence length="355" mass="38475">MLQIAIVGGTGYTGVELIRLLSSHPKVNIKWLTSRSEAGKPVASTFPSLRGISELTYSDLGEDTLSALTQCDVVFFATPHGVAMQQAEALVAAGVKVIDLAADFRLQSLQDFEHWYKHKHACPDLLKQAAYGLPEINREAIKSASVIGNPGCYPTTAILGLKPVIEAQNLASDALIEPRIIIDAKSGVSGAGRQAKLSLNYAETTDNFSAYGVAGHRHLPEIEQGVHVLLQSKFTQNIRFVPHLVPMIRGMFSTIHLGLTEAGCQLDLQAIYEQAYKDEPFIDVLPAGEFPDTRSVRASNRLRIAVHQNNSNKEATILVVQDNLVKGAAGQAVQCMNVMFGFEESLGLNHVPVVP</sequence>
<name>ARGC_PSYWF</name>
<reference key="1">
    <citation type="submission" date="2007-05" db="EMBL/GenBank/DDBJ databases">
        <title>Complete sequence of chromosome of Psychrobacter sp. PRwf-1.</title>
        <authorList>
            <consortium name="US DOE Joint Genome Institute"/>
            <person name="Copeland A."/>
            <person name="Lucas S."/>
            <person name="Lapidus A."/>
            <person name="Barry K."/>
            <person name="Detter J.C."/>
            <person name="Glavina del Rio T."/>
            <person name="Hammon N."/>
            <person name="Israni S."/>
            <person name="Dalin E."/>
            <person name="Tice H."/>
            <person name="Pitluck S."/>
            <person name="Chain P."/>
            <person name="Malfatti S."/>
            <person name="Shin M."/>
            <person name="Vergez L."/>
            <person name="Schmutz J."/>
            <person name="Larimer F."/>
            <person name="Land M."/>
            <person name="Hauser L."/>
            <person name="Kyrpides N."/>
            <person name="Kim E."/>
            <person name="Tiedje J."/>
            <person name="Richardson P."/>
        </authorList>
    </citation>
    <scope>NUCLEOTIDE SEQUENCE [LARGE SCALE GENOMIC DNA]</scope>
    <source>
        <strain>PRwf-1</strain>
    </source>
</reference>
<proteinExistence type="inferred from homology"/>
<dbReference type="EC" id="1.2.1.38" evidence="1"/>
<dbReference type="EMBL" id="CP000713">
    <property type="protein sequence ID" value="ABQ94539.1"/>
    <property type="molecule type" value="Genomic_DNA"/>
</dbReference>
<dbReference type="SMR" id="A5WFU8"/>
<dbReference type="STRING" id="349106.PsycPRwf_1598"/>
<dbReference type="KEGG" id="prw:PsycPRwf_1598"/>
<dbReference type="eggNOG" id="COG0002">
    <property type="taxonomic scope" value="Bacteria"/>
</dbReference>
<dbReference type="HOGENOM" id="CLU_006384_0_1_6"/>
<dbReference type="UniPathway" id="UPA00068">
    <property type="reaction ID" value="UER00108"/>
</dbReference>
<dbReference type="GO" id="GO:0005737">
    <property type="term" value="C:cytoplasm"/>
    <property type="evidence" value="ECO:0007669"/>
    <property type="project" value="UniProtKB-SubCell"/>
</dbReference>
<dbReference type="GO" id="GO:0003942">
    <property type="term" value="F:N-acetyl-gamma-glutamyl-phosphate reductase activity"/>
    <property type="evidence" value="ECO:0007669"/>
    <property type="project" value="UniProtKB-UniRule"/>
</dbReference>
<dbReference type="GO" id="GO:0051287">
    <property type="term" value="F:NAD binding"/>
    <property type="evidence" value="ECO:0007669"/>
    <property type="project" value="InterPro"/>
</dbReference>
<dbReference type="GO" id="GO:0070401">
    <property type="term" value="F:NADP+ binding"/>
    <property type="evidence" value="ECO:0007669"/>
    <property type="project" value="InterPro"/>
</dbReference>
<dbReference type="GO" id="GO:0006526">
    <property type="term" value="P:L-arginine biosynthetic process"/>
    <property type="evidence" value="ECO:0007669"/>
    <property type="project" value="UniProtKB-UniRule"/>
</dbReference>
<dbReference type="CDD" id="cd23934">
    <property type="entry name" value="AGPR_1_C"/>
    <property type="match status" value="1"/>
</dbReference>
<dbReference type="CDD" id="cd17895">
    <property type="entry name" value="AGPR_1_N"/>
    <property type="match status" value="1"/>
</dbReference>
<dbReference type="Gene3D" id="3.30.360.10">
    <property type="entry name" value="Dihydrodipicolinate Reductase, domain 2"/>
    <property type="match status" value="1"/>
</dbReference>
<dbReference type="Gene3D" id="3.40.50.720">
    <property type="entry name" value="NAD(P)-binding Rossmann-like Domain"/>
    <property type="match status" value="1"/>
</dbReference>
<dbReference type="HAMAP" id="MF_00150">
    <property type="entry name" value="ArgC_type1"/>
    <property type="match status" value="1"/>
</dbReference>
<dbReference type="InterPro" id="IPR023013">
    <property type="entry name" value="AGPR_AS"/>
</dbReference>
<dbReference type="InterPro" id="IPR000706">
    <property type="entry name" value="AGPR_type-1"/>
</dbReference>
<dbReference type="InterPro" id="IPR036291">
    <property type="entry name" value="NAD(P)-bd_dom_sf"/>
</dbReference>
<dbReference type="InterPro" id="IPR050085">
    <property type="entry name" value="NAGSA_dehydrogenase"/>
</dbReference>
<dbReference type="InterPro" id="IPR000534">
    <property type="entry name" value="Semialdehyde_DH_NAD-bd"/>
</dbReference>
<dbReference type="NCBIfam" id="TIGR01850">
    <property type="entry name" value="argC"/>
    <property type="match status" value="1"/>
</dbReference>
<dbReference type="PANTHER" id="PTHR32338:SF10">
    <property type="entry name" value="N-ACETYL-GAMMA-GLUTAMYL-PHOSPHATE REDUCTASE, CHLOROPLASTIC-RELATED"/>
    <property type="match status" value="1"/>
</dbReference>
<dbReference type="PANTHER" id="PTHR32338">
    <property type="entry name" value="N-ACETYL-GAMMA-GLUTAMYL-PHOSPHATE REDUCTASE, CHLOROPLASTIC-RELATED-RELATED"/>
    <property type="match status" value="1"/>
</dbReference>
<dbReference type="Pfam" id="PF01118">
    <property type="entry name" value="Semialdhyde_dh"/>
    <property type="match status" value="1"/>
</dbReference>
<dbReference type="Pfam" id="PF22698">
    <property type="entry name" value="Semialdhyde_dhC_1"/>
    <property type="match status" value="1"/>
</dbReference>
<dbReference type="SMART" id="SM00859">
    <property type="entry name" value="Semialdhyde_dh"/>
    <property type="match status" value="1"/>
</dbReference>
<dbReference type="SUPFAM" id="SSF55347">
    <property type="entry name" value="Glyceraldehyde-3-phosphate dehydrogenase-like, C-terminal domain"/>
    <property type="match status" value="1"/>
</dbReference>
<dbReference type="SUPFAM" id="SSF51735">
    <property type="entry name" value="NAD(P)-binding Rossmann-fold domains"/>
    <property type="match status" value="1"/>
</dbReference>
<dbReference type="PROSITE" id="PS01224">
    <property type="entry name" value="ARGC"/>
    <property type="match status" value="1"/>
</dbReference>